<reference key="1">
    <citation type="journal article" date="2000" name="J. Mol. Evol.">
        <title>The structure and gene repertoire of an ancient red algal plastid genome.</title>
        <authorList>
            <person name="Gloeckner G."/>
            <person name="Rosenthal A."/>
            <person name="Valentin K.-U."/>
        </authorList>
    </citation>
    <scope>NUCLEOTIDE SEQUENCE [LARGE SCALE GENOMIC DNA]</scope>
    <source>
        <strain>RK-1</strain>
    </source>
</reference>
<sequence length="282" mass="32017">MYNYTIYHPVKISGRGLYTGINSTITIYPELPHVGIYFLRTDLTDYPIVPIIPSTLLVLNSKLSTVLGFHDDYSIMLIEHLMSAISLSQLTDLKIILEGPEIPILDGSSIIWLKLLQQAKIYITSLSNCIIFKSSCTFFIQTKDTFIISFPYTSLAINTGIDFKNCLAIKSQWITILDLLINRFELVGIASSRTFGDFNQINILINEGFFQGANLYNALAFQLGNWCNGPLRFICEPAKHKVLDLIGDLRLLGVYNMFFLIGYKTNHFVNSQLVQFFKKLDK</sequence>
<keyword id="KW-0150">Chloroplast</keyword>
<keyword id="KW-0378">Hydrolase</keyword>
<keyword id="KW-0441">Lipid A biosynthesis</keyword>
<keyword id="KW-0444">Lipid biosynthesis</keyword>
<keyword id="KW-0443">Lipid metabolism</keyword>
<keyword id="KW-0479">Metal-binding</keyword>
<keyword id="KW-0934">Plastid</keyword>
<keyword id="KW-0862">Zinc</keyword>
<organism>
    <name type="scientific">Cyanidium caldarium</name>
    <name type="common">Red alga</name>
    <dbReference type="NCBI Taxonomy" id="2771"/>
    <lineage>
        <taxon>Eukaryota</taxon>
        <taxon>Rhodophyta</taxon>
        <taxon>Bangiophyceae</taxon>
        <taxon>Cyanidiales</taxon>
        <taxon>Cyanidiaceae</taxon>
        <taxon>Cyanidium</taxon>
    </lineage>
</organism>
<geneLocation type="chloroplast"/>
<feature type="chain" id="PRO_0000191973" description="UDP-3-O-acyl-N-acetylglucosamine deacetylase">
    <location>
        <begin position="1"/>
        <end position="282"/>
    </location>
</feature>
<feature type="active site" description="Proton donor" evidence="1">
    <location>
        <position position="267"/>
    </location>
</feature>
<feature type="binding site" evidence="1">
    <location>
        <position position="80"/>
    </location>
    <ligand>
        <name>Zn(2+)</name>
        <dbReference type="ChEBI" id="CHEBI:29105"/>
    </ligand>
</feature>
<feature type="binding site" evidence="1">
    <location>
        <position position="240"/>
    </location>
    <ligand>
        <name>Zn(2+)</name>
        <dbReference type="ChEBI" id="CHEBI:29105"/>
    </ligand>
</feature>
<feature type="binding site" evidence="1">
    <location>
        <position position="244"/>
    </location>
    <ligand>
        <name>Zn(2+)</name>
        <dbReference type="ChEBI" id="CHEBI:29105"/>
    </ligand>
</feature>
<proteinExistence type="inferred from homology"/>
<gene>
    <name evidence="1" type="primary">lpxC</name>
</gene>
<name>LPXC_CYACA</name>
<comment type="function">
    <text evidence="1">Catalyzes the hydrolysis of UDP-3-O-myristoyl-N-acetylglucosamine to form UDP-3-O-myristoylglucosamine and acetate. Involved in the biosynthesis of lipid A, a phosphorylated glycolipid that in bacteria anchors the lipopolysaccharide to the outer membrane of the cell. The target for the lipopolysaccharides produced in the chloroplast could either be the cell envelope of the eukaryote or the plastid membrane.</text>
</comment>
<comment type="catalytic activity">
    <reaction evidence="1">
        <text>a UDP-3-O-[(3R)-3-hydroxyacyl]-N-acetyl-alpha-D-glucosamine + H2O = a UDP-3-O-[(3R)-3-hydroxyacyl]-alpha-D-glucosamine + acetate</text>
        <dbReference type="Rhea" id="RHEA:67816"/>
        <dbReference type="ChEBI" id="CHEBI:15377"/>
        <dbReference type="ChEBI" id="CHEBI:30089"/>
        <dbReference type="ChEBI" id="CHEBI:137740"/>
        <dbReference type="ChEBI" id="CHEBI:173225"/>
        <dbReference type="EC" id="3.5.1.108"/>
    </reaction>
</comment>
<comment type="cofactor">
    <cofactor evidence="1">
        <name>Zn(2+)</name>
        <dbReference type="ChEBI" id="CHEBI:29105"/>
    </cofactor>
</comment>
<comment type="pathway">
    <text evidence="1">Glycolipid biosynthesis; lipid IV(A) biosynthesis; lipid IV(A) from (3R)-3-hydroxytetradecanoyl-[acyl-carrier-protein] and UDP-N-acetyl-alpha-D-glucosamine: step 2/6.</text>
</comment>
<comment type="subcellular location">
    <subcellularLocation>
        <location evidence="1">Plastid</location>
        <location evidence="1">Chloroplast</location>
    </subcellularLocation>
</comment>
<comment type="similarity">
    <text evidence="1">Belongs to the LpxC family.</text>
</comment>
<evidence type="ECO:0000255" key="1">
    <source>
        <dbReference type="HAMAP-Rule" id="MF_00388"/>
    </source>
</evidence>
<accession>Q9TLX3</accession>
<dbReference type="EC" id="3.5.1.108" evidence="1"/>
<dbReference type="EMBL" id="AF022186">
    <property type="protein sequence ID" value="AAF12949.1"/>
    <property type="molecule type" value="Genomic_DNA"/>
</dbReference>
<dbReference type="RefSeq" id="NP_045145.1">
    <property type="nucleotide sequence ID" value="NC_001840.1"/>
</dbReference>
<dbReference type="SMR" id="Q9TLX3"/>
<dbReference type="GeneID" id="800205"/>
<dbReference type="UniPathway" id="UPA00359">
    <property type="reaction ID" value="UER00478"/>
</dbReference>
<dbReference type="GO" id="GO:0009507">
    <property type="term" value="C:chloroplast"/>
    <property type="evidence" value="ECO:0007669"/>
    <property type="project" value="UniProtKB-SubCell"/>
</dbReference>
<dbReference type="GO" id="GO:0016020">
    <property type="term" value="C:membrane"/>
    <property type="evidence" value="ECO:0007669"/>
    <property type="project" value="GOC"/>
</dbReference>
<dbReference type="GO" id="GO:0046872">
    <property type="term" value="F:metal ion binding"/>
    <property type="evidence" value="ECO:0007669"/>
    <property type="project" value="UniProtKB-KW"/>
</dbReference>
<dbReference type="GO" id="GO:0103117">
    <property type="term" value="F:UDP-3-O-acyl-N-acetylglucosamine deacetylase activity"/>
    <property type="evidence" value="ECO:0007669"/>
    <property type="project" value="UniProtKB-UniRule"/>
</dbReference>
<dbReference type="GO" id="GO:0009245">
    <property type="term" value="P:lipid A biosynthetic process"/>
    <property type="evidence" value="ECO:0007669"/>
    <property type="project" value="UniProtKB-UniRule"/>
</dbReference>
<dbReference type="GO" id="GO:2001289">
    <property type="term" value="P:lipid X metabolic process"/>
    <property type="evidence" value="ECO:0007669"/>
    <property type="project" value="UniProtKB-ARBA"/>
</dbReference>
<dbReference type="Gene3D" id="3.30.230.20">
    <property type="entry name" value="lpxc deacetylase, domain 1"/>
    <property type="match status" value="1"/>
</dbReference>
<dbReference type="Gene3D" id="3.30.1700.10">
    <property type="entry name" value="lpxc deacetylase, domain 2"/>
    <property type="match status" value="1"/>
</dbReference>
<dbReference type="HAMAP" id="MF_00388">
    <property type="entry name" value="LpxC"/>
    <property type="match status" value="1"/>
</dbReference>
<dbReference type="InterPro" id="IPR020568">
    <property type="entry name" value="Ribosomal_Su5_D2-typ_SF"/>
</dbReference>
<dbReference type="InterPro" id="IPR004463">
    <property type="entry name" value="UDP-acyl_GlcNac_deAcase"/>
</dbReference>
<dbReference type="InterPro" id="IPR011334">
    <property type="entry name" value="UDP-acyl_GlcNac_deAcase_C"/>
</dbReference>
<dbReference type="InterPro" id="IPR015870">
    <property type="entry name" value="UDP-acyl_N-AcGlcN_deAcase_N"/>
</dbReference>
<dbReference type="PANTHER" id="PTHR33694">
    <property type="entry name" value="UDP-3-O-ACYL-N-ACETYLGLUCOSAMINE DEACETYLASE 1, MITOCHONDRIAL-RELATED"/>
    <property type="match status" value="1"/>
</dbReference>
<dbReference type="PANTHER" id="PTHR33694:SF1">
    <property type="entry name" value="UDP-3-O-ACYL-N-ACETYLGLUCOSAMINE DEACETYLASE 1, MITOCHONDRIAL-RELATED"/>
    <property type="match status" value="1"/>
</dbReference>
<dbReference type="Pfam" id="PF03331">
    <property type="entry name" value="LpxC"/>
    <property type="match status" value="1"/>
</dbReference>
<dbReference type="SUPFAM" id="SSF54211">
    <property type="entry name" value="Ribosomal protein S5 domain 2-like"/>
    <property type="match status" value="2"/>
</dbReference>
<protein>
    <recommendedName>
        <fullName evidence="1">UDP-3-O-acyl-N-acetylglucosamine deacetylase</fullName>
        <shortName evidence="1">UDP-3-O-acyl-GlcNAc deacetylase</shortName>
        <ecNumber evidence="1">3.5.1.108</ecNumber>
    </recommendedName>
    <alternativeName>
        <fullName evidence="1">UDP-3-O-[R-3-hydroxymyristoyl]-N-acetylglucosamine deacetylase</fullName>
    </alternativeName>
</protein>